<dbReference type="EMBL" id="Z46611">
    <property type="protein sequence ID" value="CAA86584.1"/>
    <property type="molecule type" value="Genomic_DNA"/>
</dbReference>
<dbReference type="PIR" id="S52226">
    <property type="entry name" value="S52226"/>
</dbReference>
<dbReference type="SMR" id="P0CY57"/>
<dbReference type="UniPathway" id="UPA00148"/>
<dbReference type="GO" id="GO:0015420">
    <property type="term" value="F:ABC-type vitamin B12 transporter activity"/>
    <property type="evidence" value="ECO:0007669"/>
    <property type="project" value="UniProtKB-UniRule"/>
</dbReference>
<dbReference type="GO" id="GO:0003824">
    <property type="term" value="F:catalytic activity"/>
    <property type="evidence" value="ECO:0007669"/>
    <property type="project" value="InterPro"/>
</dbReference>
<dbReference type="GO" id="GO:0009236">
    <property type="term" value="P:cobalamin biosynthetic process"/>
    <property type="evidence" value="ECO:0007669"/>
    <property type="project" value="UniProtKB-UniRule"/>
</dbReference>
<dbReference type="CDD" id="cd05389">
    <property type="entry name" value="CobQ_N"/>
    <property type="match status" value="1"/>
</dbReference>
<dbReference type="CDD" id="cd01750">
    <property type="entry name" value="GATase1_CobQ"/>
    <property type="match status" value="1"/>
</dbReference>
<dbReference type="Gene3D" id="3.40.50.880">
    <property type="match status" value="1"/>
</dbReference>
<dbReference type="Gene3D" id="3.40.50.300">
    <property type="entry name" value="P-loop containing nucleotide triphosphate hydrolases"/>
    <property type="match status" value="1"/>
</dbReference>
<dbReference type="HAMAP" id="MF_00028">
    <property type="entry name" value="CobQ"/>
    <property type="match status" value="1"/>
</dbReference>
<dbReference type="InterPro" id="IPR029062">
    <property type="entry name" value="Class_I_gatase-like"/>
</dbReference>
<dbReference type="InterPro" id="IPR002586">
    <property type="entry name" value="CobQ/CobB/MinD/ParA_Nub-bd_dom"/>
</dbReference>
<dbReference type="InterPro" id="IPR033949">
    <property type="entry name" value="CobQ_GATase1"/>
</dbReference>
<dbReference type="InterPro" id="IPR047045">
    <property type="entry name" value="CobQ_N"/>
</dbReference>
<dbReference type="InterPro" id="IPR004459">
    <property type="entry name" value="CobQ_synth"/>
</dbReference>
<dbReference type="InterPro" id="IPR011698">
    <property type="entry name" value="GATase_3"/>
</dbReference>
<dbReference type="InterPro" id="IPR027417">
    <property type="entry name" value="P-loop_NTPase"/>
</dbReference>
<dbReference type="NCBIfam" id="TIGR00313">
    <property type="entry name" value="cobQ"/>
    <property type="match status" value="1"/>
</dbReference>
<dbReference type="NCBIfam" id="NF001989">
    <property type="entry name" value="PRK00784.1"/>
    <property type="match status" value="1"/>
</dbReference>
<dbReference type="PANTHER" id="PTHR21343:SF1">
    <property type="entry name" value="COBYRIC ACID SYNTHASE"/>
    <property type="match status" value="1"/>
</dbReference>
<dbReference type="PANTHER" id="PTHR21343">
    <property type="entry name" value="DETHIOBIOTIN SYNTHETASE"/>
    <property type="match status" value="1"/>
</dbReference>
<dbReference type="Pfam" id="PF01656">
    <property type="entry name" value="CbiA"/>
    <property type="match status" value="1"/>
</dbReference>
<dbReference type="Pfam" id="PF07685">
    <property type="entry name" value="GATase_3"/>
    <property type="match status" value="1"/>
</dbReference>
<dbReference type="SUPFAM" id="SSF52317">
    <property type="entry name" value="Class I glutamine amidotransferase-like"/>
    <property type="match status" value="1"/>
</dbReference>
<dbReference type="SUPFAM" id="SSF52540">
    <property type="entry name" value="P-loop containing nucleoside triphosphate hydrolases"/>
    <property type="match status" value="1"/>
</dbReference>
<dbReference type="PROSITE" id="PS51274">
    <property type="entry name" value="GATASE_COBBQ"/>
    <property type="match status" value="1"/>
</dbReference>
<keyword id="KW-0169">Cobalamin biosynthesis</keyword>
<keyword id="KW-0315">Glutamine amidotransferase</keyword>
<accession>P0CY57</accession>
<accession>O68093</accession>
<accession>Q52686</accession>
<feature type="chain" id="PRO_0000141327" description="Cobyric acid synthase">
    <location>
        <begin position="1"/>
        <end position="483"/>
    </location>
</feature>
<feature type="domain" description="GATase cobBQ-type">
    <location>
        <begin position="248"/>
        <end position="437"/>
    </location>
</feature>
<feature type="active site" description="Nucleophile" evidence="1">
    <location>
        <position position="330"/>
    </location>
</feature>
<feature type="active site" evidence="1">
    <location>
        <position position="429"/>
    </location>
</feature>
<reference key="1">
    <citation type="journal article" date="1995" name="J. Bacteriol.">
        <title>Identification and sequence analysis of genes involved in late steps in cobalamin (vitamin B12) synthesis in Rhodobacter capsulatus.</title>
        <authorList>
            <person name="Pollich M."/>
            <person name="Klug G."/>
        </authorList>
    </citation>
    <scope>NUCLEOTIDE SEQUENCE [GENOMIC DNA]</scope>
    <source>
        <strain>ATCC 33303 / B10</strain>
    </source>
</reference>
<protein>
    <recommendedName>
        <fullName>Cobyric acid synthase</fullName>
    </recommendedName>
</protein>
<sequence length="483" mass="50410">MTALMIQGAGSNVGKSMLVAGLCRAARRRGLTVAPFKPQNMSNNAAVTADGGEIGRAQALQALACGLEPVTDMNPILLKPESDVGAQVVVQGKRLTTTRARDYATLKPQLMGAVLESFNRLKATHDLVIVEGAGSPAEVNLRAGDIANMGFARAADVPVVLVGDIDRGGVIAQIVGTQAVLDPADAEMISGFLINKFRGDVTLFDDGYRLIGARTGWRGFGTLPWFPLAHKLPAEDALDIASGPATGGTVIACLTLSRIANFDDLDPLAAEPGVRMVMVQPGQPIPAEARLVILPGSKSTRGDLAFLREQGWDIDLAAHVRRGGHVLGICGGYQMLGRSVADPEGIEGPAGTTPGLGLLDVETVMTPDKRLTRVRVRATHAGSGLAVEGYEIHIGRTEGADRARPFAIVEGQNEGAMSADGRVIGSYLHGLFGADAFRAAFLRGLGIRASGQSHAAGVEAALDALADHLETHLDVTGILALAR</sequence>
<proteinExistence type="inferred from homology"/>
<organism>
    <name type="scientific">Rhodobacter capsulatus</name>
    <name type="common">Rhodopseudomonas capsulata</name>
    <dbReference type="NCBI Taxonomy" id="1061"/>
    <lineage>
        <taxon>Bacteria</taxon>
        <taxon>Pseudomonadati</taxon>
        <taxon>Pseudomonadota</taxon>
        <taxon>Alphaproteobacteria</taxon>
        <taxon>Rhodobacterales</taxon>
        <taxon>Rhodobacter group</taxon>
        <taxon>Rhodobacter</taxon>
    </lineage>
</organism>
<name>COBQ_RHOCA</name>
<evidence type="ECO:0000250" key="1"/>
<evidence type="ECO:0000305" key="2"/>
<comment type="function">
    <text evidence="1">Catalyzes amidations at positions B, D, E, and G on adenosylcobyrinic A,C-diamide. NH(2) groups are provided by glutamine, and one molecule of ATP is hydrogenolyzed for each amidation (By similarity).</text>
</comment>
<comment type="pathway">
    <text>Cofactor biosynthesis; adenosylcobalamin biosynthesis.</text>
</comment>
<comment type="similarity">
    <text evidence="2">Belongs to the CobB/CobQ family. CobQ subfamily.</text>
</comment>
<gene>
    <name type="primary">cobQ</name>
</gene>